<accession>P31204</accession>
<name>TRPA_ANTSP</name>
<gene>
    <name evidence="1" type="primary">trpA</name>
</gene>
<comment type="function">
    <text evidence="1">The alpha subunit is responsible for the aldol cleavage of indoleglycerol phosphate to indole and glyceraldehyde 3-phosphate.</text>
</comment>
<comment type="catalytic activity">
    <reaction evidence="1">
        <text>(1S,2R)-1-C-(indol-3-yl)glycerol 3-phosphate + L-serine = D-glyceraldehyde 3-phosphate + L-tryptophan + H2O</text>
        <dbReference type="Rhea" id="RHEA:10532"/>
        <dbReference type="ChEBI" id="CHEBI:15377"/>
        <dbReference type="ChEBI" id="CHEBI:33384"/>
        <dbReference type="ChEBI" id="CHEBI:57912"/>
        <dbReference type="ChEBI" id="CHEBI:58866"/>
        <dbReference type="ChEBI" id="CHEBI:59776"/>
        <dbReference type="EC" id="4.2.1.20"/>
    </reaction>
</comment>
<comment type="pathway">
    <text evidence="1">Amino-acid biosynthesis; L-tryptophan biosynthesis; L-tryptophan from chorismate: step 5/5.</text>
</comment>
<comment type="subunit">
    <text evidence="1">Tetramer of two alpha and two beta chains.</text>
</comment>
<comment type="subcellular location">
    <subcellularLocation>
        <location>Plastid</location>
        <location>Chloroplast</location>
    </subcellularLocation>
</comment>
<comment type="similarity">
    <text evidence="1">Belongs to the TrpA family.</text>
</comment>
<protein>
    <recommendedName>
        <fullName evidence="1">Tryptophan synthase alpha chain</fullName>
        <ecNumber evidence="1">4.2.1.20</ecNumber>
    </recommendedName>
</protein>
<sequence>MNIISESLRSHPNSCALIPFITAGYPDINTTIQALYELDSQGADIIELGIPYSDALADGSVIQHSSLIALQGGTYIDQVLHILEVVSTKLNTPIIILPYYNPILKRGIEKFIKQISLMGAKGLIVPDLPLEETDELIVICNDNQIELVLFVAPTSSMKRINSISKKSPGCIYLVSSTGVTGVRDDIDIKVMELSNYIKKVSNKFIMLGFGISTPEHIKKIMKWNIDGVVVGSAFVKKLSALKIDDRISSISSLCKSLKKATIL</sequence>
<organism>
    <name type="scientific">Antithamnion sp.</name>
    <name type="common">Red alga</name>
    <dbReference type="NCBI Taxonomy" id="2767"/>
    <lineage>
        <taxon>Eukaryota</taxon>
        <taxon>Rhodophyta</taxon>
        <taxon>Florideophyceae</taxon>
        <taxon>Rhodymeniophycidae</taxon>
        <taxon>Ceramiales</taxon>
        <taxon>Ceramiaceae</taxon>
        <taxon>Antithamnion</taxon>
    </lineage>
</organism>
<geneLocation type="chloroplast"/>
<keyword id="KW-0028">Amino-acid biosynthesis</keyword>
<keyword id="KW-0057">Aromatic amino acid biosynthesis</keyword>
<keyword id="KW-0150">Chloroplast</keyword>
<keyword id="KW-0456">Lyase</keyword>
<keyword id="KW-0934">Plastid</keyword>
<keyword id="KW-0822">Tryptophan biosynthesis</keyword>
<evidence type="ECO:0000255" key="1">
    <source>
        <dbReference type="HAMAP-Rule" id="MF_00131"/>
    </source>
</evidence>
<feature type="chain" id="PRO_0000098902" description="Tryptophan synthase alpha chain">
    <location>
        <begin position="1"/>
        <end position="263"/>
    </location>
</feature>
<feature type="active site" description="Proton acceptor" evidence="1">
    <location>
        <position position="47"/>
    </location>
</feature>
<feature type="active site" description="Proton acceptor" evidence="1">
    <location>
        <position position="58"/>
    </location>
</feature>
<proteinExistence type="inferred from homology"/>
<reference key="1">
    <citation type="submission" date="1993-02" db="EMBL/GenBank/DDBJ databases">
        <authorList>
            <person name="Valentin K.-U."/>
        </authorList>
    </citation>
    <scope>NUCLEOTIDE SEQUENCE [GENOMIC DNA]</scope>
</reference>
<dbReference type="EC" id="4.2.1.20" evidence="1"/>
<dbReference type="EMBL" id="Z21642">
    <property type="protein sequence ID" value="CAA79757.1"/>
    <property type="molecule type" value="Genomic_DNA"/>
</dbReference>
<dbReference type="PIR" id="S31843">
    <property type="entry name" value="S31843"/>
</dbReference>
<dbReference type="SMR" id="P31204"/>
<dbReference type="UniPathway" id="UPA00035">
    <property type="reaction ID" value="UER00044"/>
</dbReference>
<dbReference type="GO" id="GO:0009507">
    <property type="term" value="C:chloroplast"/>
    <property type="evidence" value="ECO:0007669"/>
    <property type="project" value="UniProtKB-SubCell"/>
</dbReference>
<dbReference type="GO" id="GO:0005829">
    <property type="term" value="C:cytosol"/>
    <property type="evidence" value="ECO:0007669"/>
    <property type="project" value="TreeGrafter"/>
</dbReference>
<dbReference type="GO" id="GO:0004834">
    <property type="term" value="F:tryptophan synthase activity"/>
    <property type="evidence" value="ECO:0007669"/>
    <property type="project" value="UniProtKB-UniRule"/>
</dbReference>
<dbReference type="CDD" id="cd04724">
    <property type="entry name" value="Tryptophan_synthase_alpha"/>
    <property type="match status" value="1"/>
</dbReference>
<dbReference type="FunFam" id="3.20.20.70:FF:000037">
    <property type="entry name" value="Tryptophan synthase alpha chain"/>
    <property type="match status" value="1"/>
</dbReference>
<dbReference type="Gene3D" id="3.20.20.70">
    <property type="entry name" value="Aldolase class I"/>
    <property type="match status" value="1"/>
</dbReference>
<dbReference type="HAMAP" id="MF_00131">
    <property type="entry name" value="Trp_synth_alpha"/>
    <property type="match status" value="1"/>
</dbReference>
<dbReference type="InterPro" id="IPR013785">
    <property type="entry name" value="Aldolase_TIM"/>
</dbReference>
<dbReference type="InterPro" id="IPR011060">
    <property type="entry name" value="RibuloseP-bd_barrel"/>
</dbReference>
<dbReference type="InterPro" id="IPR018204">
    <property type="entry name" value="Trp_synthase_alpha_AS"/>
</dbReference>
<dbReference type="InterPro" id="IPR002028">
    <property type="entry name" value="Trp_synthase_suA"/>
</dbReference>
<dbReference type="NCBIfam" id="TIGR00262">
    <property type="entry name" value="trpA"/>
    <property type="match status" value="1"/>
</dbReference>
<dbReference type="PANTHER" id="PTHR43406:SF1">
    <property type="entry name" value="TRYPTOPHAN SYNTHASE ALPHA CHAIN, CHLOROPLASTIC"/>
    <property type="match status" value="1"/>
</dbReference>
<dbReference type="PANTHER" id="PTHR43406">
    <property type="entry name" value="TRYPTOPHAN SYNTHASE, ALPHA CHAIN"/>
    <property type="match status" value="1"/>
</dbReference>
<dbReference type="Pfam" id="PF00290">
    <property type="entry name" value="Trp_syntA"/>
    <property type="match status" value="1"/>
</dbReference>
<dbReference type="SUPFAM" id="SSF51366">
    <property type="entry name" value="Ribulose-phoshate binding barrel"/>
    <property type="match status" value="1"/>
</dbReference>
<dbReference type="PROSITE" id="PS00167">
    <property type="entry name" value="TRP_SYNTHASE_ALPHA"/>
    <property type="match status" value="1"/>
</dbReference>